<reference key="1">
    <citation type="journal article" date="2016" name="Stand. Genomic Sci.">
        <title>Complete genome sequence of the Antarctic Halorubrum lacusprofundi type strain ACAM 34.</title>
        <authorList>
            <person name="Anderson I.J."/>
            <person name="DasSarma P."/>
            <person name="Lucas S."/>
            <person name="Copeland A."/>
            <person name="Lapidus A."/>
            <person name="Del Rio T.G."/>
            <person name="Tice H."/>
            <person name="Dalin E."/>
            <person name="Bruce D.C."/>
            <person name="Goodwin L."/>
            <person name="Pitluck S."/>
            <person name="Sims D."/>
            <person name="Brettin T.S."/>
            <person name="Detter J.C."/>
            <person name="Han C.S."/>
            <person name="Larimer F."/>
            <person name="Hauser L."/>
            <person name="Land M."/>
            <person name="Ivanova N."/>
            <person name="Richardson P."/>
            <person name="Cavicchioli R."/>
            <person name="DasSarma S."/>
            <person name="Woese C.R."/>
            <person name="Kyrpides N.C."/>
        </authorList>
    </citation>
    <scope>NUCLEOTIDE SEQUENCE [LARGE SCALE GENOMIC DNA]</scope>
    <source>
        <strain>ATCC 49239 / DSM 5036 / JCM 8891 / ACAM 34</strain>
    </source>
</reference>
<accession>B9LQR1</accession>
<comment type="similarity">
    <text evidence="1">Belongs to the universal ribosomal protein uL16 family.</text>
</comment>
<feature type="chain" id="PRO_1000135236" description="Large ribosomal subunit protein uL16">
    <location>
        <begin position="1"/>
        <end position="176"/>
    </location>
</feature>
<dbReference type="EMBL" id="CP001365">
    <property type="protein sequence ID" value="ACM55663.1"/>
    <property type="molecule type" value="Genomic_DNA"/>
</dbReference>
<dbReference type="RefSeq" id="WP_012659307.1">
    <property type="nucleotide sequence ID" value="NC_012029.1"/>
</dbReference>
<dbReference type="SMR" id="B9LQR1"/>
<dbReference type="GeneID" id="7401412"/>
<dbReference type="KEGG" id="hla:Hlac_0057"/>
<dbReference type="eggNOG" id="arCOG04113">
    <property type="taxonomic scope" value="Archaea"/>
</dbReference>
<dbReference type="HOGENOM" id="CLU_084051_0_2_2"/>
<dbReference type="Proteomes" id="UP000000740">
    <property type="component" value="Chromosome 1"/>
</dbReference>
<dbReference type="GO" id="GO:1990904">
    <property type="term" value="C:ribonucleoprotein complex"/>
    <property type="evidence" value="ECO:0007669"/>
    <property type="project" value="UniProtKB-KW"/>
</dbReference>
<dbReference type="GO" id="GO:0005840">
    <property type="term" value="C:ribosome"/>
    <property type="evidence" value="ECO:0007669"/>
    <property type="project" value="UniProtKB-KW"/>
</dbReference>
<dbReference type="GO" id="GO:0003735">
    <property type="term" value="F:structural constituent of ribosome"/>
    <property type="evidence" value="ECO:0007669"/>
    <property type="project" value="InterPro"/>
</dbReference>
<dbReference type="GO" id="GO:0006412">
    <property type="term" value="P:translation"/>
    <property type="evidence" value="ECO:0007669"/>
    <property type="project" value="UniProtKB-UniRule"/>
</dbReference>
<dbReference type="CDD" id="cd01433">
    <property type="entry name" value="Ribosomal_L16_L10e"/>
    <property type="match status" value="1"/>
</dbReference>
<dbReference type="Gene3D" id="3.90.1170.10">
    <property type="entry name" value="Ribosomal protein L10e/L16"/>
    <property type="match status" value="1"/>
</dbReference>
<dbReference type="HAMAP" id="MF_00448">
    <property type="entry name" value="Ribosomal_uL16_arch"/>
    <property type="match status" value="1"/>
</dbReference>
<dbReference type="InterPro" id="IPR047873">
    <property type="entry name" value="Ribosomal_uL16"/>
</dbReference>
<dbReference type="InterPro" id="IPR022981">
    <property type="entry name" value="Ribosomal_uL16_arc"/>
</dbReference>
<dbReference type="InterPro" id="IPR018255">
    <property type="entry name" value="Ribosomal_uL16_CS_euk_arc"/>
</dbReference>
<dbReference type="InterPro" id="IPR016180">
    <property type="entry name" value="Ribosomal_uL16_dom"/>
</dbReference>
<dbReference type="InterPro" id="IPR001197">
    <property type="entry name" value="Ribosomal_uL16_euk_arch"/>
</dbReference>
<dbReference type="InterPro" id="IPR036920">
    <property type="entry name" value="Ribosomal_uL16_sf"/>
</dbReference>
<dbReference type="NCBIfam" id="NF003239">
    <property type="entry name" value="PRK04199.1-4"/>
    <property type="match status" value="1"/>
</dbReference>
<dbReference type="NCBIfam" id="NF003241">
    <property type="entry name" value="PRK04199.1-6"/>
    <property type="match status" value="1"/>
</dbReference>
<dbReference type="PANTHER" id="PTHR11726">
    <property type="entry name" value="60S RIBOSOMAL PROTEIN L10"/>
    <property type="match status" value="1"/>
</dbReference>
<dbReference type="Pfam" id="PF00252">
    <property type="entry name" value="Ribosomal_L16"/>
    <property type="match status" value="1"/>
</dbReference>
<dbReference type="PIRSF" id="PIRSF005590">
    <property type="entry name" value="Ribosomal_L10"/>
    <property type="match status" value="1"/>
</dbReference>
<dbReference type="SUPFAM" id="SSF54686">
    <property type="entry name" value="Ribosomal protein L16p/L10e"/>
    <property type="match status" value="1"/>
</dbReference>
<dbReference type="PROSITE" id="PS01257">
    <property type="entry name" value="RIBOSOMAL_L10E"/>
    <property type="match status" value="1"/>
</dbReference>
<keyword id="KW-1185">Reference proteome</keyword>
<keyword id="KW-0687">Ribonucleoprotein</keyword>
<keyword id="KW-0689">Ribosomal protein</keyword>
<sequence>MSDKPASMYRTIDKPSYTRREYITGIPGSKIAQHNMGDLSAEPDDYPVQISLRVEEELQIRHGSLESSRLSANRHLIKELGEGNYKMTLRKFPHQVIRENKQATGAGADRVSDGMRQAFGKPVGTAARLNKDDIVFTAYCDVEQASVVKEAFRRAYNKLSPPCRITVDRGEELLVS</sequence>
<protein>
    <recommendedName>
        <fullName evidence="1">Large ribosomal subunit protein uL16</fullName>
    </recommendedName>
    <alternativeName>
        <fullName evidence="2">50S ribosomal protein L10e</fullName>
    </alternativeName>
</protein>
<organism>
    <name type="scientific">Halorubrum lacusprofundi (strain ATCC 49239 / DSM 5036 / JCM 8891 / ACAM 34)</name>
    <dbReference type="NCBI Taxonomy" id="416348"/>
    <lineage>
        <taxon>Archaea</taxon>
        <taxon>Methanobacteriati</taxon>
        <taxon>Methanobacteriota</taxon>
        <taxon>Stenosarchaea group</taxon>
        <taxon>Halobacteria</taxon>
        <taxon>Halobacteriales</taxon>
        <taxon>Haloferacaceae</taxon>
        <taxon>Halorubrum</taxon>
    </lineage>
</organism>
<name>RL10E_HALLT</name>
<evidence type="ECO:0000255" key="1">
    <source>
        <dbReference type="HAMAP-Rule" id="MF_00448"/>
    </source>
</evidence>
<evidence type="ECO:0000305" key="2"/>
<gene>
    <name evidence="1" type="primary">rpl10e</name>
    <name type="ordered locus">Hlac_0057</name>
</gene>
<proteinExistence type="inferred from homology"/>